<organism>
    <name type="scientific">Aspergillus niger (strain ATCC 1015 / CBS 113.46 / FGSC A1144 / LSHB Ac4 / NCTC 3858a / NRRL 328 / USDA 3528.7)</name>
    <dbReference type="NCBI Taxonomy" id="380704"/>
    <lineage>
        <taxon>Eukaryota</taxon>
        <taxon>Fungi</taxon>
        <taxon>Dikarya</taxon>
        <taxon>Ascomycota</taxon>
        <taxon>Pezizomycotina</taxon>
        <taxon>Eurotiomycetes</taxon>
        <taxon>Eurotiomycetidae</taxon>
        <taxon>Eurotiales</taxon>
        <taxon>Aspergillaceae</taxon>
        <taxon>Aspergillus</taxon>
        <taxon>Aspergillus subgen. Circumdati</taxon>
    </lineage>
</organism>
<keyword id="KW-0274">FAD</keyword>
<keyword id="KW-0285">Flavoprotein</keyword>
<keyword id="KW-0560">Oxidoreductase</keyword>
<dbReference type="EC" id="1.-.-.-" evidence="8"/>
<dbReference type="EMBL" id="ACJE01000012">
    <property type="protein sequence ID" value="EHA22201.1"/>
    <property type="molecule type" value="Genomic_DNA"/>
</dbReference>
<dbReference type="SMR" id="G3Y424"/>
<dbReference type="STRING" id="380704.G3Y424"/>
<dbReference type="VEuPathDB" id="FungiDB:ASPNIDRAFT2_1216498"/>
<dbReference type="HOGENOM" id="CLU_018354_1_2_1"/>
<dbReference type="OrthoDB" id="111549at5052"/>
<dbReference type="UniPathway" id="UPA00213"/>
<dbReference type="Proteomes" id="UP000009038">
    <property type="component" value="Unassembled WGS sequence"/>
</dbReference>
<dbReference type="GO" id="GO:0071949">
    <property type="term" value="F:FAD binding"/>
    <property type="evidence" value="ECO:0007669"/>
    <property type="project" value="InterPro"/>
</dbReference>
<dbReference type="GO" id="GO:0016491">
    <property type="term" value="F:oxidoreductase activity"/>
    <property type="evidence" value="ECO:0007669"/>
    <property type="project" value="UniProtKB-KW"/>
</dbReference>
<dbReference type="GO" id="GO:0016114">
    <property type="term" value="P:terpenoid biosynthetic process"/>
    <property type="evidence" value="ECO:0007669"/>
    <property type="project" value="UniProtKB-UniPathway"/>
</dbReference>
<dbReference type="Gene3D" id="3.30.465.10">
    <property type="match status" value="1"/>
</dbReference>
<dbReference type="InterPro" id="IPR016166">
    <property type="entry name" value="FAD-bd_PCMH"/>
</dbReference>
<dbReference type="InterPro" id="IPR036318">
    <property type="entry name" value="FAD-bd_PCMH-like_sf"/>
</dbReference>
<dbReference type="InterPro" id="IPR016169">
    <property type="entry name" value="FAD-bd_PCMH_sub2"/>
</dbReference>
<dbReference type="InterPro" id="IPR050416">
    <property type="entry name" value="FAD-linked_Oxidoreductase"/>
</dbReference>
<dbReference type="InterPro" id="IPR006094">
    <property type="entry name" value="Oxid_FAD_bind_N"/>
</dbReference>
<dbReference type="PANTHER" id="PTHR42973">
    <property type="entry name" value="BINDING OXIDOREDUCTASE, PUTATIVE (AFU_ORTHOLOGUE AFUA_1G17690)-RELATED"/>
    <property type="match status" value="1"/>
</dbReference>
<dbReference type="PANTHER" id="PTHR42973:SF54">
    <property type="entry name" value="FAD-BINDING PCMH-TYPE DOMAIN-CONTAINING PROTEIN"/>
    <property type="match status" value="1"/>
</dbReference>
<dbReference type="Pfam" id="PF01565">
    <property type="entry name" value="FAD_binding_4"/>
    <property type="match status" value="1"/>
</dbReference>
<dbReference type="SUPFAM" id="SSF56176">
    <property type="entry name" value="FAD-binding/transporter-associated domain-like"/>
    <property type="match status" value="1"/>
</dbReference>
<dbReference type="PROSITE" id="PS51387">
    <property type="entry name" value="FAD_PCMH"/>
    <property type="match status" value="1"/>
</dbReference>
<gene>
    <name evidence="6" type="primary">yanF</name>
    <name type="ORF">ASPNIDRAFT_44970</name>
</gene>
<sequence>MSSSAECRPIGWGGWGPDPNTSPTRAAIKWFADPRSLHHQQCACGLWNARRAMQWVIPAPPRIWIDDQPRMVKLAYILGAVTVFLTSGNAADVSPTSSVAASTTPSAADSLSSLGLSLPAGNVLVGNNETFTASSPYYEPLIDEAWSGNCRLNASCIVTPKSAQEVSLVIQVLSILDTKFSIRSGGHSSSPGFSSIGSNGVLVALERLNTLSISADRKTLTVGPGNRWEAVYQYLEQYNLTVLGGREPVVGVGGFVLGGGLSLFYNTNGLAIDTVTRFQVVTPNGTIVNATPTEHADLYKGLKGGLNNFGIIVEYDLTTNTGIDVWFEVKNYTRAETPALLAAYATYLQNADVRSNVEIQANPAYTVVLYGYLDHVSAPSAFNAFSTVPSVSTVYPPTNASLNEVLLEIGTAGVTGSSWTYTVSFSFKVTNPDFLQESYKTYLEAAASLLPSGVLLEYVPQGIIPNLVTKGQAQNGGNLLGLEATPQVWGEIFAQFPATVSQSTVASAVNDLLAKITSSAESQGVHLPYIFANDAGPDQQVLRGYGEDNLKYIATVAERYDPKGVMQKLQNDAYFVSKEL</sequence>
<feature type="chain" id="PRO_0000436764" description="FAD-dependent monooxygenase yanF">
    <location>
        <begin position="1"/>
        <end position="580"/>
    </location>
</feature>
<feature type="domain" description="FAD-binding PCMH-type" evidence="2">
    <location>
        <begin position="150"/>
        <end position="322"/>
    </location>
</feature>
<feature type="region of interest" description="Disordered" evidence="3">
    <location>
        <begin position="1"/>
        <end position="21"/>
    </location>
</feature>
<feature type="modified residue" description="Pros-8alpha-FAD histidine" evidence="1">
    <location>
        <position position="187"/>
    </location>
</feature>
<reference key="1">
    <citation type="journal article" date="2011" name="Genome Res.">
        <title>Comparative genomics of citric-acid-producing Aspergillus niger ATCC 1015 versus enzyme-producing CBS 513.88.</title>
        <authorList>
            <person name="Andersen M.R."/>
            <person name="Salazar M.P."/>
            <person name="Schaap P.J."/>
            <person name="van de Vondervoort P.J.I."/>
            <person name="Culley D."/>
            <person name="Thykaer J."/>
            <person name="Frisvad J.C."/>
            <person name="Nielsen K.F."/>
            <person name="Albang R."/>
            <person name="Albermann K."/>
            <person name="Berka R.M."/>
            <person name="Braus G.H."/>
            <person name="Braus-Stromeyer S.A."/>
            <person name="Corrochano L.M."/>
            <person name="Dai Z."/>
            <person name="van Dijck P.W.M."/>
            <person name="Hofmann G."/>
            <person name="Lasure L.L."/>
            <person name="Magnuson J.K."/>
            <person name="Menke H."/>
            <person name="Meijer M."/>
            <person name="Meijer S.L."/>
            <person name="Nielsen J.B."/>
            <person name="Nielsen M.L."/>
            <person name="van Ooyen A.J.J."/>
            <person name="Pel H.J."/>
            <person name="Poulsen L."/>
            <person name="Samson R.A."/>
            <person name="Stam H."/>
            <person name="Tsang A."/>
            <person name="van den Brink J.M."/>
            <person name="Atkins A."/>
            <person name="Aerts A."/>
            <person name="Shapiro H."/>
            <person name="Pangilinan J."/>
            <person name="Salamov A."/>
            <person name="Lou Y."/>
            <person name="Lindquist E."/>
            <person name="Lucas S."/>
            <person name="Grimwood J."/>
            <person name="Grigoriev I.V."/>
            <person name="Kubicek C.P."/>
            <person name="Martinez D."/>
            <person name="van Peij N.N.M.E."/>
            <person name="Roubos J.A."/>
            <person name="Nielsen J."/>
            <person name="Baker S.E."/>
        </authorList>
    </citation>
    <scope>NUCLEOTIDE SEQUENCE [LARGE SCALE GENOMIC DNA]</scope>
    <source>
        <strain>ATCC 1015 / CBS 113.46 / FGSC A1144 / LSHB Ac4 / NCTC 3858a / NRRL 328 / USDA 3528.7</strain>
    </source>
</reference>
<reference key="2">
    <citation type="journal article" date="2000" name="J. Org. Chem.">
        <title>Yanuthones: novel metabolites from a marine isolate of Aspergillus niger.</title>
        <authorList>
            <person name="Bugni T.S."/>
            <person name="Abbanat D."/>
            <person name="Bernan V.S."/>
            <person name="Maiese W.M."/>
            <person name="Greenstein M."/>
            <person name="Van Wagoner R.M."/>
            <person name="Ireland C.M."/>
        </authorList>
    </citation>
    <scope>BIOTECHNOLOGY</scope>
</reference>
<reference key="3">
    <citation type="journal article" date="2014" name="Chem. Biol.">
        <title>Molecular and chemical characterization of the biosynthesis of the 6-MSA-derived meroterpenoid yanuthone D in Aspergillus niger.</title>
        <authorList>
            <person name="Holm D.K."/>
            <person name="Petersen L.M."/>
            <person name="Klitgaard A."/>
            <person name="Knudsen P.B."/>
            <person name="Jarczynska Z.D."/>
            <person name="Nielsen K.F."/>
            <person name="Gotfredsen C.H."/>
            <person name="Larsen T.O."/>
            <person name="Mortensen U.H."/>
        </authorList>
    </citation>
    <scope>FUNCTION</scope>
    <scope>DISRUPTION PHENOTYPE</scope>
</reference>
<evidence type="ECO:0000250" key="1">
    <source>
        <dbReference type="UniProtKB" id="P08159"/>
    </source>
</evidence>
<evidence type="ECO:0000255" key="2">
    <source>
        <dbReference type="PROSITE-ProRule" id="PRU00718"/>
    </source>
</evidence>
<evidence type="ECO:0000256" key="3">
    <source>
        <dbReference type="SAM" id="MobiDB-lite"/>
    </source>
</evidence>
<evidence type="ECO:0000269" key="4">
    <source>
    </source>
</evidence>
<evidence type="ECO:0000269" key="5">
    <source>
    </source>
</evidence>
<evidence type="ECO:0000303" key="6">
    <source>
    </source>
</evidence>
<evidence type="ECO:0000305" key="7"/>
<evidence type="ECO:0000305" key="8">
    <source>
    </source>
</evidence>
<accession>G3Y424</accession>
<name>YANF_ASPNA</name>
<proteinExistence type="evidence at protein level"/>
<protein>
    <recommendedName>
        <fullName evidence="6">FAD-dependent monooxygenase yanF</fullName>
        <ecNumber evidence="8">1.-.-.-</ecNumber>
    </recommendedName>
    <alternativeName>
        <fullName evidence="6">Yanuthone D biosynthesis cluster protein F</fullName>
    </alternativeName>
</protein>
<comment type="function">
    <text evidence="5">FAD-dependent monooxygenase; part of the gene cluster that mediates the biosynthesis of yanuthone D, a fungal isoprenoid epoxycyclohexenone that acts as an antibiotic against fungi and bacteria (PubMed:24684908). The first step of the pathway is the synthesis of 6-methylsalicylic acid (6-MSA) by the polyketide synthase yanA (PubMed:24684908). 6-MSA is then converted to m-cresol by the decarboxylase yanB (PubMed:24684908). The cytochrome P450 monooxygenase yanC then catalyzes the oxidation of m-cresol to toluquinol (PubMed:24684908). Epoxidation of toluquinol is then performed by the short chain dehydrogenase yanD, with the help of yanE, and a further prenylated by yanG leads to 7-deacetoxyyanuthone A (PubMed:24684908). The next step is the hydroxylation of C-22 of 7-deacetoxyyanuthone A by the cytochrome P450 monooxygenase yanH to yield 22-deacetylyanuthone A (PubMed:24684908). O-Mevalon transferase yanI then attaches mevalon to the hydroxyl group of 22-deacetylyanuthone A to produce yanuthone E (PubMed:24684908). Finally, the FAD-dependent monooxygenase yanF oxidizes the hydroxyl group at C15 of yanuthone E to form yanuthone D (PubMed:24684908). Furthermore, several branching points in the pathway lead to the production of yanuthones F and G from 7-deacetoxyyanuthone A; yanuthones H and I from 22-deacetylyanuthone A; and yanuthone J from yanuthone E (PubMed:24684908).</text>
</comment>
<comment type="pathway">
    <text evidence="5">Secondary metabolite biosynthesis; terpenoid biosynthesis.</text>
</comment>
<comment type="disruption phenotype">
    <text evidence="5">Loses the ability to produce yanuthone D, but accumulates yanuthone E (PubMed:24684908).</text>
</comment>
<comment type="biotechnology">
    <text evidence="4">Yanuthone D is an antibiotic against C.albicans, methicillin-resistant S.aureus (MRSA), and vancomycin-resistant Enterococcus (PubMed:11031048).</text>
</comment>
<comment type="similarity">
    <text evidence="7">Belongs to the oxygen-dependent FAD-linked oxidoreductase family.</text>
</comment>